<comment type="biotechnology">
    <text evidence="3">Possible candidate for an effective malaria vaccine as determined by epitope response in sera.</text>
</comment>
<reference key="1">
    <citation type="journal article" date="2002" name="Nature">
        <title>Genome sequence of the human malaria parasite Plasmodium falciparum.</title>
        <authorList>
            <person name="Gardner M.J."/>
            <person name="Hall N."/>
            <person name="Fung E."/>
            <person name="White O."/>
            <person name="Berriman M."/>
            <person name="Hyman R.W."/>
            <person name="Carlton J.M."/>
            <person name="Pain A."/>
            <person name="Nelson K.E."/>
            <person name="Bowman S."/>
            <person name="Paulsen I.T."/>
            <person name="James K.D."/>
            <person name="Eisen J.A."/>
            <person name="Rutherford K.M."/>
            <person name="Salzberg S.L."/>
            <person name="Craig A."/>
            <person name="Kyes S."/>
            <person name="Chan M.-S."/>
            <person name="Nene V."/>
            <person name="Shallom S.J."/>
            <person name="Suh B."/>
            <person name="Peterson J."/>
            <person name="Angiuoli S."/>
            <person name="Pertea M."/>
            <person name="Allen J."/>
            <person name="Selengut J."/>
            <person name="Haft D."/>
            <person name="Mather M.W."/>
            <person name="Vaidya A.B."/>
            <person name="Martin D.M.A."/>
            <person name="Fairlamb A.H."/>
            <person name="Fraunholz M.J."/>
            <person name="Roos D.S."/>
            <person name="Ralph S.A."/>
            <person name="McFadden G.I."/>
            <person name="Cummings L.M."/>
            <person name="Subramanian G.M."/>
            <person name="Mungall C."/>
            <person name="Venter J.C."/>
            <person name="Carucci D.J."/>
            <person name="Hoffman S.L."/>
            <person name="Newbold C."/>
            <person name="Davis R.W."/>
            <person name="Fraser C.M."/>
            <person name="Barrell B.G."/>
        </authorList>
    </citation>
    <scope>NUCLEOTIDE SEQUENCE [LARGE SCALE GENOMIC DNA]</scope>
    <source>
        <strain>3D7</strain>
    </source>
</reference>
<reference evidence="5" key="2">
    <citation type="journal article" date="2002" name="Nature">
        <title>Sequence of Plasmodium falciparum chromosomes 1, 3-9 and 13.</title>
        <authorList>
            <person name="Hall N."/>
            <person name="Pain A."/>
            <person name="Berriman M."/>
            <person name="Churcher C.M."/>
            <person name="Harris B."/>
            <person name="Harris D."/>
            <person name="Mungall K.L."/>
            <person name="Bowman S."/>
            <person name="Atkin R."/>
            <person name="Baker S."/>
            <person name="Barron A."/>
            <person name="Brooks K."/>
            <person name="Buckee C.O."/>
            <person name="Burrows C."/>
            <person name="Cherevach I."/>
            <person name="Chillingworth C."/>
            <person name="Chillingworth T."/>
            <person name="Christodoulou Z."/>
            <person name="Clark L."/>
            <person name="Clark R."/>
            <person name="Corton C."/>
            <person name="Cronin A."/>
            <person name="Davies R.M."/>
            <person name="Davis P."/>
            <person name="Dear P."/>
            <person name="Dearden F."/>
            <person name="Doggett J."/>
            <person name="Feltwell T."/>
            <person name="Goble A."/>
            <person name="Goodhead I."/>
            <person name="Gwilliam R."/>
            <person name="Hamlin N."/>
            <person name="Hance Z."/>
            <person name="Harper D."/>
            <person name="Hauser H."/>
            <person name="Hornsby T."/>
            <person name="Holroyd S."/>
            <person name="Horrocks P."/>
            <person name="Humphray S."/>
            <person name="Jagels K."/>
            <person name="James K.D."/>
            <person name="Johnson D."/>
            <person name="Kerhornou A."/>
            <person name="Knights A."/>
            <person name="Konfortov B."/>
            <person name="Kyes S."/>
            <person name="Larke N."/>
            <person name="Lawson D."/>
            <person name="Lennard N."/>
            <person name="Line A."/>
            <person name="Maddison M."/>
            <person name="Mclean J."/>
            <person name="Mooney P."/>
            <person name="Moule S."/>
            <person name="Murphy L."/>
            <person name="Oliver K."/>
            <person name="Ormond D."/>
            <person name="Price C."/>
            <person name="Quail M.A."/>
            <person name="Rabbinowitsch E."/>
            <person name="Rajandream M.A."/>
            <person name="Rutter S."/>
            <person name="Rutherford K.M."/>
            <person name="Sanders M."/>
            <person name="Simmonds M."/>
            <person name="Seeger K."/>
            <person name="Sharp S."/>
            <person name="Smith R."/>
            <person name="Squares R."/>
            <person name="Squares S."/>
            <person name="Stevens K."/>
            <person name="Taylor K."/>
            <person name="Tivey A."/>
            <person name="Unwin L."/>
            <person name="Whitehead S."/>
            <person name="Woodward J.R."/>
            <person name="Sulston J.E."/>
            <person name="Craig A."/>
            <person name="Newbold C."/>
            <person name="Barrell B.G."/>
        </authorList>
    </citation>
    <scope>NUCLEOTIDE SEQUENCE [LARGE SCALE GENOMIC DNA]</scope>
    <source>
        <strain>3D7</strain>
    </source>
</reference>
<reference evidence="4" key="3">
    <citation type="journal article" date="2007" name="PLoS ONE">
        <title>Rapid identification of malaria vaccine candidates based on alpha-helical coiled coil protein motif.</title>
        <authorList>
            <person name="Villard V."/>
            <person name="Agak G.W."/>
            <person name="Frank G."/>
            <person name="Jafarshad A."/>
            <person name="Servis C."/>
            <person name="Nebie I."/>
            <person name="Sirima S.B."/>
            <person name="Felger I."/>
            <person name="Arevalo-Herrera M."/>
            <person name="Herrera S."/>
            <person name="Heitz F."/>
            <person name="Baecker V."/>
            <person name="Druilhe P."/>
            <person name="Kajava A.V."/>
            <person name="Corradin G."/>
        </authorList>
    </citation>
    <scope>SYNTHESIS OF 244-270</scope>
    <scope>POSSIBLE CANDIDATE MALARIA EPITOPE</scope>
</reference>
<keyword id="KW-0175">Coiled coil</keyword>
<keyword id="KW-0477">Merozoite</keyword>
<keyword id="KW-1185">Reference proteome</keyword>
<feature type="chain" id="PRO_0000361052" description="Uncharacterized protein MAL13P1.147">
    <location>
        <begin position="1"/>
        <end position="270"/>
    </location>
</feature>
<feature type="region of interest" description="Disordered" evidence="2">
    <location>
        <begin position="1"/>
        <end position="21"/>
    </location>
</feature>
<feature type="region of interest" description="Disordered" evidence="2">
    <location>
        <begin position="53"/>
        <end position="77"/>
    </location>
</feature>
<feature type="coiled-coil region" evidence="1">
    <location>
        <begin position="182"/>
        <end position="270"/>
    </location>
</feature>
<feature type="compositionally biased region" description="Basic and acidic residues" evidence="2">
    <location>
        <begin position="58"/>
        <end position="75"/>
    </location>
</feature>
<sequence>MSTNINEEKCLEGDDIKYEKPDTHKNFWKSFGLNNEAGKLLYHLYGESNKIKPNILSSKHDGDKNKNDKKKEDAKLNTTYRKPQIHYPSLKKKAVKENPIDTIKHRKPLSKILEETQNYDCIKDIPISIGMNRETEKNKLHNIFVEEKCLMVPPSCAPMILTQEEKKEIIEKAQQRYIYINEENKSREEKHIQALRNYKLELIQELNEKRKLLQDIINEDKNIQGNISINQSDKRVSNKGNSYNIIQIKNDIEQCQKSIKKIEDNLNTYE</sequence>
<gene>
    <name type="ORF">MAL13P1.147</name>
</gene>
<dbReference type="EMBL" id="AL844509">
    <property type="protein sequence ID" value="CAD52415.1"/>
    <property type="molecule type" value="Genomic_DNA"/>
</dbReference>
<dbReference type="RefSeq" id="XP_001350007.1">
    <property type="nucleotide sequence ID" value="XM_001349971.1"/>
</dbReference>
<dbReference type="SMR" id="Q8IE51"/>
<dbReference type="PaxDb" id="5833-MAL13P1.147"/>
<dbReference type="EnsemblProtists" id="CAD52415">
    <property type="protein sequence ID" value="CAD52415"/>
    <property type="gene ID" value="PF3D7_1329200"/>
</dbReference>
<dbReference type="KEGG" id="pfa:PF3D7_1329200"/>
<dbReference type="VEuPathDB" id="PlasmoDB:PF3D7_1329200"/>
<dbReference type="HOGENOM" id="CLU_1009992_0_0_1"/>
<dbReference type="InParanoid" id="Q8IE51"/>
<dbReference type="OMA" id="THTNFWK"/>
<dbReference type="OrthoDB" id="371941at2759"/>
<dbReference type="PhylomeDB" id="Q8IE51"/>
<dbReference type="Proteomes" id="UP000001450">
    <property type="component" value="Chromosome 13"/>
</dbReference>
<name>Y13P1_PLAF7</name>
<protein>
    <recommendedName>
        <fullName>Uncharacterized protein MAL13P1.147</fullName>
    </recommendedName>
</protein>
<proteinExistence type="evidence at protein level"/>
<organism>
    <name type="scientific">Plasmodium falciparum (isolate 3D7)</name>
    <dbReference type="NCBI Taxonomy" id="36329"/>
    <lineage>
        <taxon>Eukaryota</taxon>
        <taxon>Sar</taxon>
        <taxon>Alveolata</taxon>
        <taxon>Apicomplexa</taxon>
        <taxon>Aconoidasida</taxon>
        <taxon>Haemosporida</taxon>
        <taxon>Plasmodiidae</taxon>
        <taxon>Plasmodium</taxon>
        <taxon>Plasmodium (Laverania)</taxon>
    </lineage>
</organism>
<accession>Q8IE51</accession>
<evidence type="ECO:0000255" key="1"/>
<evidence type="ECO:0000256" key="2">
    <source>
        <dbReference type="SAM" id="MobiDB-lite"/>
    </source>
</evidence>
<evidence type="ECO:0000269" key="3">
    <source>
    </source>
</evidence>
<evidence type="ECO:0000305" key="4"/>
<evidence type="ECO:0000312" key="5">
    <source>
        <dbReference type="EMBL" id="CAD52415.1"/>
    </source>
</evidence>